<proteinExistence type="inferred from homology"/>
<sequence>MNLTHINEEGRARMVDVSEKAETKREAVAIGSIYMKNETLRRIHEGTIKKGDVLAVAQVAGIMAAKNTSHMIPMCHPIMITGCDISFNLDFENSKIDIKAVVKTVGQTGVEMEALTAVTVAALTIYDMCKAIDRDMVISEIMLVKKSGGKSGLYEREV</sequence>
<feature type="chain" id="PRO_1000139303" description="Cyclic pyranopterin monophosphate synthase">
    <location>
        <begin position="1"/>
        <end position="158"/>
    </location>
</feature>
<feature type="active site" evidence="1">
    <location>
        <position position="127"/>
    </location>
</feature>
<feature type="binding site" evidence="1">
    <location>
        <begin position="74"/>
        <end position="76"/>
    </location>
    <ligand>
        <name>substrate</name>
    </ligand>
</feature>
<feature type="binding site" evidence="1">
    <location>
        <begin position="112"/>
        <end position="113"/>
    </location>
    <ligand>
        <name>substrate</name>
    </ligand>
</feature>
<organism>
    <name type="scientific">Thermoanaerobacter pseudethanolicus (strain ATCC 33223 / 39E)</name>
    <name type="common">Clostridium thermohydrosulfuricum</name>
    <dbReference type="NCBI Taxonomy" id="340099"/>
    <lineage>
        <taxon>Bacteria</taxon>
        <taxon>Bacillati</taxon>
        <taxon>Bacillota</taxon>
        <taxon>Clostridia</taxon>
        <taxon>Thermoanaerobacterales</taxon>
        <taxon>Thermoanaerobacteraceae</taxon>
        <taxon>Thermoanaerobacter</taxon>
    </lineage>
</organism>
<keyword id="KW-0456">Lyase</keyword>
<keyword id="KW-0501">Molybdenum cofactor biosynthesis</keyword>
<keyword id="KW-1185">Reference proteome</keyword>
<reference key="1">
    <citation type="submission" date="2008-01" db="EMBL/GenBank/DDBJ databases">
        <title>Complete sequence of Thermoanaerobacter pseudethanolicus 39E.</title>
        <authorList>
            <person name="Copeland A."/>
            <person name="Lucas S."/>
            <person name="Lapidus A."/>
            <person name="Barry K."/>
            <person name="Glavina del Rio T."/>
            <person name="Dalin E."/>
            <person name="Tice H."/>
            <person name="Pitluck S."/>
            <person name="Bruce D."/>
            <person name="Goodwin L."/>
            <person name="Saunders E."/>
            <person name="Brettin T."/>
            <person name="Detter J.C."/>
            <person name="Han C."/>
            <person name="Schmutz J."/>
            <person name="Larimer F."/>
            <person name="Land M."/>
            <person name="Hauser L."/>
            <person name="Kyrpides N."/>
            <person name="Lykidis A."/>
            <person name="Hemme C."/>
            <person name="Fields M.W."/>
            <person name="He Z."/>
            <person name="Zhou J."/>
            <person name="Richardson P."/>
        </authorList>
    </citation>
    <scope>NUCLEOTIDE SEQUENCE [LARGE SCALE GENOMIC DNA]</scope>
    <source>
        <strain>ATCC 33223 / DSM 2355 / 39E</strain>
    </source>
</reference>
<gene>
    <name evidence="1" type="primary">moaC</name>
    <name type="ordered locus">Teth39_0862</name>
</gene>
<evidence type="ECO:0000255" key="1">
    <source>
        <dbReference type="HAMAP-Rule" id="MF_01224"/>
    </source>
</evidence>
<comment type="function">
    <text evidence="1">Catalyzes the conversion of (8S)-3',8-cyclo-7,8-dihydroguanosine 5'-triphosphate to cyclic pyranopterin monophosphate (cPMP).</text>
</comment>
<comment type="catalytic activity">
    <reaction evidence="1">
        <text>(8S)-3',8-cyclo-7,8-dihydroguanosine 5'-triphosphate = cyclic pyranopterin phosphate + diphosphate</text>
        <dbReference type="Rhea" id="RHEA:49580"/>
        <dbReference type="ChEBI" id="CHEBI:33019"/>
        <dbReference type="ChEBI" id="CHEBI:59648"/>
        <dbReference type="ChEBI" id="CHEBI:131766"/>
        <dbReference type="EC" id="4.6.1.17"/>
    </reaction>
</comment>
<comment type="pathway">
    <text evidence="1">Cofactor biosynthesis; molybdopterin biosynthesis.</text>
</comment>
<comment type="subunit">
    <text evidence="1">Homohexamer; trimer of dimers.</text>
</comment>
<comment type="similarity">
    <text evidence="1">Belongs to the MoaC family.</text>
</comment>
<protein>
    <recommendedName>
        <fullName evidence="1">Cyclic pyranopterin monophosphate synthase</fullName>
        <ecNumber evidence="1">4.6.1.17</ecNumber>
    </recommendedName>
    <alternativeName>
        <fullName evidence="1">Molybdenum cofactor biosynthesis protein C</fullName>
    </alternativeName>
</protein>
<dbReference type="EC" id="4.6.1.17" evidence="1"/>
<dbReference type="EMBL" id="CP000924">
    <property type="protein sequence ID" value="ABY94518.1"/>
    <property type="molecule type" value="Genomic_DNA"/>
</dbReference>
<dbReference type="RefSeq" id="WP_003868650.1">
    <property type="nucleotide sequence ID" value="NC_010321.1"/>
</dbReference>
<dbReference type="SMR" id="B0K8Q5"/>
<dbReference type="STRING" id="340099.Teth39_0862"/>
<dbReference type="KEGG" id="tpd:Teth39_0862"/>
<dbReference type="eggNOG" id="COG0315">
    <property type="taxonomic scope" value="Bacteria"/>
</dbReference>
<dbReference type="HOGENOM" id="CLU_074693_1_1_9"/>
<dbReference type="UniPathway" id="UPA00344"/>
<dbReference type="Proteomes" id="UP000002156">
    <property type="component" value="Chromosome"/>
</dbReference>
<dbReference type="GO" id="GO:0061799">
    <property type="term" value="F:cyclic pyranopterin monophosphate synthase activity"/>
    <property type="evidence" value="ECO:0007669"/>
    <property type="project" value="UniProtKB-UniRule"/>
</dbReference>
<dbReference type="GO" id="GO:0006777">
    <property type="term" value="P:Mo-molybdopterin cofactor biosynthetic process"/>
    <property type="evidence" value="ECO:0007669"/>
    <property type="project" value="UniProtKB-UniRule"/>
</dbReference>
<dbReference type="CDD" id="cd01420">
    <property type="entry name" value="MoaC_PE"/>
    <property type="match status" value="1"/>
</dbReference>
<dbReference type="Gene3D" id="3.30.70.640">
    <property type="entry name" value="Molybdopterin cofactor biosynthesis C (MoaC) domain"/>
    <property type="match status" value="1"/>
</dbReference>
<dbReference type="HAMAP" id="MF_01224_B">
    <property type="entry name" value="MoaC_B"/>
    <property type="match status" value="1"/>
</dbReference>
<dbReference type="InterPro" id="IPR023045">
    <property type="entry name" value="MoaC"/>
</dbReference>
<dbReference type="InterPro" id="IPR047594">
    <property type="entry name" value="MoaC_bact/euk"/>
</dbReference>
<dbReference type="InterPro" id="IPR036522">
    <property type="entry name" value="MoaC_sf"/>
</dbReference>
<dbReference type="InterPro" id="IPR050105">
    <property type="entry name" value="MoCo_biosynth_MoaA/MoaC"/>
</dbReference>
<dbReference type="InterPro" id="IPR002820">
    <property type="entry name" value="Mopterin_CF_biosynth-C_dom"/>
</dbReference>
<dbReference type="NCBIfam" id="TIGR00581">
    <property type="entry name" value="moaC"/>
    <property type="match status" value="1"/>
</dbReference>
<dbReference type="NCBIfam" id="NF006870">
    <property type="entry name" value="PRK09364.1"/>
    <property type="match status" value="1"/>
</dbReference>
<dbReference type="PANTHER" id="PTHR22960:SF29">
    <property type="entry name" value="CYCLIC PYRANOPTERIN MONOPHOSPHATE SYNTHASE"/>
    <property type="match status" value="1"/>
</dbReference>
<dbReference type="PANTHER" id="PTHR22960">
    <property type="entry name" value="MOLYBDOPTERIN COFACTOR SYNTHESIS PROTEIN A"/>
    <property type="match status" value="1"/>
</dbReference>
<dbReference type="Pfam" id="PF01967">
    <property type="entry name" value="MoaC"/>
    <property type="match status" value="1"/>
</dbReference>
<dbReference type="SUPFAM" id="SSF55040">
    <property type="entry name" value="Molybdenum cofactor biosynthesis protein C, MoaC"/>
    <property type="match status" value="1"/>
</dbReference>
<name>MOAC_THEP3</name>
<accession>B0K8Q5</accession>